<protein>
    <recommendedName>
        <fullName>Farnesyl pyrophosphate synthase 2</fullName>
        <shortName>FPP synthase 2</shortName>
        <shortName>FPS 2</shortName>
        <ecNumber>2.5.1.10</ecNumber>
    </recommendedName>
    <alternativeName>
        <fullName>(2E,6E)-farnesyl diphosphate synthase 2</fullName>
    </alternativeName>
    <alternativeName>
        <fullName>Dimethylallyltranstransferase 2</fullName>
        <ecNumber>2.5.1.1</ecNumber>
    </alternativeName>
    <alternativeName>
        <fullName>Farnesyl diphosphate synthase 2</fullName>
    </alternativeName>
    <alternativeName>
        <fullName>Geranyltranstransferase 2</fullName>
    </alternativeName>
</protein>
<dbReference type="EC" id="2.5.1.10"/>
<dbReference type="EC" id="2.5.1.1"/>
<dbReference type="EMBL" id="X82543">
    <property type="protein sequence ID" value="CAA57893.1"/>
    <property type="molecule type" value="mRNA"/>
</dbReference>
<dbReference type="PIR" id="S71399">
    <property type="entry name" value="S71399"/>
</dbReference>
<dbReference type="SMR" id="O24242"/>
<dbReference type="UniPathway" id="UPA00259">
    <property type="reaction ID" value="UER00368"/>
</dbReference>
<dbReference type="UniPathway" id="UPA00260">
    <property type="reaction ID" value="UER00369"/>
</dbReference>
<dbReference type="GO" id="GO:0005737">
    <property type="term" value="C:cytoplasm"/>
    <property type="evidence" value="ECO:0007669"/>
    <property type="project" value="UniProtKB-SubCell"/>
</dbReference>
<dbReference type="GO" id="GO:0004337">
    <property type="term" value="F:(2E,6E)-farnesyl diphosphate synthase activity"/>
    <property type="evidence" value="ECO:0007669"/>
    <property type="project" value="UniProtKB-EC"/>
</dbReference>
<dbReference type="GO" id="GO:0004161">
    <property type="term" value="F:dimethylallyltranstransferase activity"/>
    <property type="evidence" value="ECO:0007669"/>
    <property type="project" value="UniProtKB-EC"/>
</dbReference>
<dbReference type="GO" id="GO:0046872">
    <property type="term" value="F:metal ion binding"/>
    <property type="evidence" value="ECO:0007669"/>
    <property type="project" value="UniProtKB-KW"/>
</dbReference>
<dbReference type="GO" id="GO:0006695">
    <property type="term" value="P:cholesterol biosynthetic process"/>
    <property type="evidence" value="ECO:0007669"/>
    <property type="project" value="UniProtKB-KW"/>
</dbReference>
<dbReference type="GO" id="GO:0045337">
    <property type="term" value="P:farnesyl diphosphate biosynthetic process"/>
    <property type="evidence" value="ECO:0007669"/>
    <property type="project" value="UniProtKB-UniPathway"/>
</dbReference>
<dbReference type="GO" id="GO:0033384">
    <property type="term" value="P:geranyl diphosphate biosynthetic process"/>
    <property type="evidence" value="ECO:0007669"/>
    <property type="project" value="UniProtKB-UniPathway"/>
</dbReference>
<dbReference type="CDD" id="cd00685">
    <property type="entry name" value="Trans_IPPS_HT"/>
    <property type="match status" value="1"/>
</dbReference>
<dbReference type="FunFam" id="1.10.600.10:FF:000008">
    <property type="entry name" value="Farnesyl pyrophosphate synthase"/>
    <property type="match status" value="1"/>
</dbReference>
<dbReference type="Gene3D" id="1.10.600.10">
    <property type="entry name" value="Farnesyl Diphosphate Synthase"/>
    <property type="match status" value="1"/>
</dbReference>
<dbReference type="InterPro" id="IPR039702">
    <property type="entry name" value="FPS1-like"/>
</dbReference>
<dbReference type="InterPro" id="IPR008949">
    <property type="entry name" value="Isoprenoid_synthase_dom_sf"/>
</dbReference>
<dbReference type="InterPro" id="IPR000092">
    <property type="entry name" value="Polyprenyl_synt"/>
</dbReference>
<dbReference type="InterPro" id="IPR033749">
    <property type="entry name" value="Polyprenyl_synt_CS"/>
</dbReference>
<dbReference type="PANTHER" id="PTHR11525:SF0">
    <property type="entry name" value="FARNESYL PYROPHOSPHATE SYNTHASE"/>
    <property type="match status" value="1"/>
</dbReference>
<dbReference type="PANTHER" id="PTHR11525">
    <property type="entry name" value="FARNESYL-PYROPHOSPHATE SYNTHETASE"/>
    <property type="match status" value="1"/>
</dbReference>
<dbReference type="Pfam" id="PF00348">
    <property type="entry name" value="polyprenyl_synt"/>
    <property type="match status" value="1"/>
</dbReference>
<dbReference type="SFLD" id="SFLDS00005">
    <property type="entry name" value="Isoprenoid_Synthase_Type_I"/>
    <property type="match status" value="1"/>
</dbReference>
<dbReference type="SFLD" id="SFLDG01017">
    <property type="entry name" value="Polyprenyl_Transferase_Like"/>
    <property type="match status" value="1"/>
</dbReference>
<dbReference type="SUPFAM" id="SSF48576">
    <property type="entry name" value="Terpenoid synthases"/>
    <property type="match status" value="1"/>
</dbReference>
<dbReference type="PROSITE" id="PS00723">
    <property type="entry name" value="POLYPRENYL_SYNTHASE_1"/>
    <property type="match status" value="1"/>
</dbReference>
<dbReference type="PROSITE" id="PS00444">
    <property type="entry name" value="POLYPRENYL_SYNTHASE_2"/>
    <property type="match status" value="1"/>
</dbReference>
<keyword id="KW-0152">Cholesterol biosynthesis</keyword>
<keyword id="KW-0153">Cholesterol metabolism</keyword>
<keyword id="KW-0963">Cytoplasm</keyword>
<keyword id="KW-0414">Isoprene biosynthesis</keyword>
<keyword id="KW-0444">Lipid biosynthesis</keyword>
<keyword id="KW-0443">Lipid metabolism</keyword>
<keyword id="KW-0460">Magnesium</keyword>
<keyword id="KW-0479">Metal-binding</keyword>
<keyword id="KW-0752">Steroid biosynthesis</keyword>
<keyword id="KW-0753">Steroid metabolism</keyword>
<keyword id="KW-0756">Sterol biosynthesis</keyword>
<keyword id="KW-1207">Sterol metabolism</keyword>
<keyword id="KW-0808">Transferase</keyword>
<reference key="1">
    <citation type="journal article" date="1996" name="Arch. Biochem. Biophys.">
        <title>Cloning, characterization, and heterologous expression of cDNAs for farnesyl diphosphate synthase from the guayule rubber plant reveals that this prenyltransferase occurs in rubber particles.</title>
        <authorList>
            <person name="Pan Z."/>
            <person name="Herickhoff L.A."/>
            <person name="Backhaus R.A."/>
        </authorList>
    </citation>
    <scope>NUCLEOTIDE SEQUENCE [MRNA]</scope>
    <source>
        <strain>cv. Line 11591</strain>
        <tissue>Stem bark</tissue>
    </source>
</reference>
<evidence type="ECO:0000250" key="1"/>
<evidence type="ECO:0000250" key="2">
    <source>
        <dbReference type="UniProtKB" id="P14324"/>
    </source>
</evidence>
<evidence type="ECO:0000305" key="3"/>
<accession>O24242</accession>
<organism>
    <name type="scientific">Parthenium argentatum</name>
    <name type="common">Guayule rubber plant</name>
    <dbReference type="NCBI Taxonomy" id="35935"/>
    <lineage>
        <taxon>Eukaryota</taxon>
        <taxon>Viridiplantae</taxon>
        <taxon>Streptophyta</taxon>
        <taxon>Embryophyta</taxon>
        <taxon>Tracheophyta</taxon>
        <taxon>Spermatophyta</taxon>
        <taxon>Magnoliopsida</taxon>
        <taxon>eudicotyledons</taxon>
        <taxon>Gunneridae</taxon>
        <taxon>Pentapetalae</taxon>
        <taxon>asterids</taxon>
        <taxon>campanulids</taxon>
        <taxon>Asterales</taxon>
        <taxon>Asteraceae</taxon>
        <taxon>Asteroideae</taxon>
        <taxon>Heliantheae alliance</taxon>
        <taxon>Heliantheae</taxon>
        <taxon>Parthenium</taxon>
    </lineage>
</organism>
<name>FPPS2_PARAR</name>
<proteinExistence type="evidence at transcript level"/>
<feature type="chain" id="PRO_0000123960" description="Farnesyl pyrophosphate synthase 2">
    <location>
        <begin position="1"/>
        <end position="342"/>
    </location>
</feature>
<feature type="binding site" evidence="2">
    <location>
        <position position="48"/>
    </location>
    <ligand>
        <name>isopentenyl diphosphate</name>
        <dbReference type="ChEBI" id="CHEBI:128769"/>
    </ligand>
</feature>
<feature type="binding site" evidence="2">
    <location>
        <position position="51"/>
    </location>
    <ligand>
        <name>isopentenyl diphosphate</name>
        <dbReference type="ChEBI" id="CHEBI:128769"/>
    </ligand>
</feature>
<feature type="binding site" evidence="2">
    <location>
        <position position="86"/>
    </location>
    <ligand>
        <name>isopentenyl diphosphate</name>
        <dbReference type="ChEBI" id="CHEBI:128769"/>
    </ligand>
</feature>
<feature type="binding site" evidence="2">
    <location>
        <position position="93"/>
    </location>
    <ligand>
        <name>Mg(2+)</name>
        <dbReference type="ChEBI" id="CHEBI:18420"/>
        <label>1</label>
    </ligand>
</feature>
<feature type="binding site" evidence="2">
    <location>
        <position position="93"/>
    </location>
    <ligand>
        <name>Mg(2+)</name>
        <dbReference type="ChEBI" id="CHEBI:18420"/>
        <label>2</label>
    </ligand>
</feature>
<feature type="binding site" evidence="2">
    <location>
        <position position="97"/>
    </location>
    <ligand>
        <name>Mg(2+)</name>
        <dbReference type="ChEBI" id="CHEBI:18420"/>
        <label>1</label>
    </ligand>
</feature>
<feature type="binding site" evidence="2">
    <location>
        <position position="97"/>
    </location>
    <ligand>
        <name>Mg(2+)</name>
        <dbReference type="ChEBI" id="CHEBI:18420"/>
        <label>2</label>
    </ligand>
</feature>
<feature type="binding site" evidence="1">
    <location>
        <position position="102"/>
    </location>
    <ligand>
        <name>dimethylallyl diphosphate</name>
        <dbReference type="ChEBI" id="CHEBI:57623"/>
    </ligand>
</feature>
<feature type="binding site" evidence="2">
    <location>
        <position position="103"/>
    </location>
    <ligand>
        <name>isopentenyl diphosphate</name>
        <dbReference type="ChEBI" id="CHEBI:128769"/>
    </ligand>
</feature>
<feature type="binding site" evidence="1">
    <location>
        <position position="190"/>
    </location>
    <ligand>
        <name>dimethylallyl diphosphate</name>
        <dbReference type="ChEBI" id="CHEBI:57623"/>
    </ligand>
</feature>
<feature type="binding site" evidence="1">
    <location>
        <position position="191"/>
    </location>
    <ligand>
        <name>dimethylallyl diphosphate</name>
        <dbReference type="ChEBI" id="CHEBI:57623"/>
    </ligand>
</feature>
<feature type="binding site" evidence="1">
    <location>
        <position position="229"/>
    </location>
    <ligand>
        <name>dimethylallyl diphosphate</name>
        <dbReference type="ChEBI" id="CHEBI:57623"/>
    </ligand>
</feature>
<feature type="binding site" evidence="1">
    <location>
        <position position="246"/>
    </location>
    <ligand>
        <name>dimethylallyl diphosphate</name>
        <dbReference type="ChEBI" id="CHEBI:57623"/>
    </ligand>
</feature>
<feature type="binding site" evidence="1">
    <location>
        <position position="255"/>
    </location>
    <ligand>
        <name>dimethylallyl diphosphate</name>
        <dbReference type="ChEBI" id="CHEBI:57623"/>
    </ligand>
</feature>
<sequence>MSTDIRSKFLQVYDTLKSELINDPAFEFDDDSRQWIEKMLDYNVPGGKLNRGLSVIDSYQLLKGGKLTDDEIFHASALGWCVEWLQAYFLVLDDIMDESHTRRGQPCWFRLPKVGMIAANDGIILRNHVPRILKKHFRGKPYYVDLVDLFNEVEFQTASGQMIDLITTLVGEKDLSKYSLSIHRRIVQYKTAYYSFYLPVACALLMFGEDLEKHVEVKNVLVEMGTYFQVQDDYLDCFGAPEVIGKIGTDIEDFKCSWLVVKALELANEEQKKVLHENYGKKDPSPVAKVKELYNTLNLQGVFEDYENTSYKKLITSIEGHPSKAVQAVLKSFLGKIYRRQK</sequence>
<comment type="function">
    <text>Catalyzes the sequential condensation of isopentenyl pyrophosphate with the allylic pyrophosphates, dimethylallyl pyrophosphate, and then with the resultant geranylpyrophosphate to the ultimate product farnesyl pyrophosphate.</text>
</comment>
<comment type="catalytic activity">
    <reaction>
        <text>isopentenyl diphosphate + dimethylallyl diphosphate = (2E)-geranyl diphosphate + diphosphate</text>
        <dbReference type="Rhea" id="RHEA:22408"/>
        <dbReference type="ChEBI" id="CHEBI:33019"/>
        <dbReference type="ChEBI" id="CHEBI:57623"/>
        <dbReference type="ChEBI" id="CHEBI:58057"/>
        <dbReference type="ChEBI" id="CHEBI:128769"/>
        <dbReference type="EC" id="2.5.1.1"/>
    </reaction>
</comment>
<comment type="catalytic activity">
    <reaction>
        <text>isopentenyl diphosphate + (2E)-geranyl diphosphate = (2E,6E)-farnesyl diphosphate + diphosphate</text>
        <dbReference type="Rhea" id="RHEA:19361"/>
        <dbReference type="ChEBI" id="CHEBI:33019"/>
        <dbReference type="ChEBI" id="CHEBI:58057"/>
        <dbReference type="ChEBI" id="CHEBI:128769"/>
        <dbReference type="ChEBI" id="CHEBI:175763"/>
        <dbReference type="EC" id="2.5.1.10"/>
    </reaction>
</comment>
<comment type="cofactor">
    <cofactor evidence="1">
        <name>Mg(2+)</name>
        <dbReference type="ChEBI" id="CHEBI:18420"/>
    </cofactor>
    <text evidence="1">Binds 2 Mg(2+) ions per subunit.</text>
</comment>
<comment type="pathway">
    <text>Isoprenoid biosynthesis; farnesyl diphosphate biosynthesis; farnesyl diphosphate from geranyl diphosphate and isopentenyl diphosphate: step 1/1.</text>
</comment>
<comment type="pathway">
    <text>Isoprenoid biosynthesis; geranyl diphosphate biosynthesis; geranyl diphosphate from dimethylallyl diphosphate and isopentenyl diphosphate: step 1/1.</text>
</comment>
<comment type="subcellular location">
    <subcellularLocation>
        <location>Cytoplasm</location>
    </subcellularLocation>
    <text>Rubber particles.</text>
</comment>
<comment type="similarity">
    <text evidence="3">Belongs to the FPP/GGPP synthase family.</text>
</comment>
<gene>
    <name type="primary">FPS2</name>
</gene>